<organism>
    <name type="scientific">Corynebacterium glutamicum (strain R)</name>
    <dbReference type="NCBI Taxonomy" id="340322"/>
    <lineage>
        <taxon>Bacteria</taxon>
        <taxon>Bacillati</taxon>
        <taxon>Actinomycetota</taxon>
        <taxon>Actinomycetes</taxon>
        <taxon>Mycobacteriales</taxon>
        <taxon>Corynebacteriaceae</taxon>
        <taxon>Corynebacterium</taxon>
    </lineage>
</organism>
<dbReference type="EC" id="2.7.7.7" evidence="1"/>
<dbReference type="EMBL" id="AP009044">
    <property type="protein sequence ID" value="BAF55024.1"/>
    <property type="molecule type" value="Genomic_DNA"/>
</dbReference>
<dbReference type="RefSeq" id="WP_011897551.1">
    <property type="nucleotide sequence ID" value="NC_009342.1"/>
</dbReference>
<dbReference type="SMR" id="A4QFK8"/>
<dbReference type="KEGG" id="cgt:cgR_2026"/>
<dbReference type="HOGENOM" id="CLU_012348_1_0_11"/>
<dbReference type="PhylomeDB" id="A4QFK8"/>
<dbReference type="Proteomes" id="UP000006698">
    <property type="component" value="Chromosome"/>
</dbReference>
<dbReference type="GO" id="GO:0005829">
    <property type="term" value="C:cytosol"/>
    <property type="evidence" value="ECO:0007669"/>
    <property type="project" value="TreeGrafter"/>
</dbReference>
<dbReference type="GO" id="GO:0003684">
    <property type="term" value="F:damaged DNA binding"/>
    <property type="evidence" value="ECO:0007669"/>
    <property type="project" value="InterPro"/>
</dbReference>
<dbReference type="GO" id="GO:0003887">
    <property type="term" value="F:DNA-directed DNA polymerase activity"/>
    <property type="evidence" value="ECO:0007669"/>
    <property type="project" value="UniProtKB-UniRule"/>
</dbReference>
<dbReference type="GO" id="GO:0000287">
    <property type="term" value="F:magnesium ion binding"/>
    <property type="evidence" value="ECO:0007669"/>
    <property type="project" value="UniProtKB-UniRule"/>
</dbReference>
<dbReference type="GO" id="GO:0006261">
    <property type="term" value="P:DNA-templated DNA replication"/>
    <property type="evidence" value="ECO:0007669"/>
    <property type="project" value="UniProtKB-UniRule"/>
</dbReference>
<dbReference type="GO" id="GO:0042276">
    <property type="term" value="P:error-prone translesion synthesis"/>
    <property type="evidence" value="ECO:0007669"/>
    <property type="project" value="TreeGrafter"/>
</dbReference>
<dbReference type="GO" id="GO:0009432">
    <property type="term" value="P:SOS response"/>
    <property type="evidence" value="ECO:0007669"/>
    <property type="project" value="TreeGrafter"/>
</dbReference>
<dbReference type="CDD" id="cd03586">
    <property type="entry name" value="PolY_Pol_IV_kappa"/>
    <property type="match status" value="1"/>
</dbReference>
<dbReference type="FunFam" id="1.10.150.20:FF:000068">
    <property type="entry name" value="DNA polymerase IV"/>
    <property type="match status" value="1"/>
</dbReference>
<dbReference type="Gene3D" id="3.30.70.270">
    <property type="match status" value="1"/>
</dbReference>
<dbReference type="Gene3D" id="3.40.1170.60">
    <property type="match status" value="1"/>
</dbReference>
<dbReference type="Gene3D" id="1.10.150.20">
    <property type="entry name" value="5' to 3' exonuclease, C-terminal subdomain"/>
    <property type="match status" value="1"/>
</dbReference>
<dbReference type="Gene3D" id="3.30.1490.100">
    <property type="entry name" value="DNA polymerase, Y-family, little finger domain"/>
    <property type="match status" value="1"/>
</dbReference>
<dbReference type="HAMAP" id="MF_01113">
    <property type="entry name" value="DNApol_IV"/>
    <property type="match status" value="1"/>
</dbReference>
<dbReference type="InterPro" id="IPR043502">
    <property type="entry name" value="DNA/RNA_pol_sf"/>
</dbReference>
<dbReference type="InterPro" id="IPR036775">
    <property type="entry name" value="DNA_pol_Y-fam_lit_finger_sf"/>
</dbReference>
<dbReference type="InterPro" id="IPR017961">
    <property type="entry name" value="DNA_pol_Y-fam_little_finger"/>
</dbReference>
<dbReference type="InterPro" id="IPR050116">
    <property type="entry name" value="DNA_polymerase-Y"/>
</dbReference>
<dbReference type="InterPro" id="IPR022880">
    <property type="entry name" value="DNApol_IV"/>
</dbReference>
<dbReference type="InterPro" id="IPR053848">
    <property type="entry name" value="IMS_HHH_1"/>
</dbReference>
<dbReference type="InterPro" id="IPR043128">
    <property type="entry name" value="Rev_trsase/Diguanyl_cyclase"/>
</dbReference>
<dbReference type="InterPro" id="IPR001126">
    <property type="entry name" value="UmuC"/>
</dbReference>
<dbReference type="NCBIfam" id="NF002677">
    <property type="entry name" value="PRK02406.1"/>
    <property type="match status" value="1"/>
</dbReference>
<dbReference type="NCBIfam" id="NF002882">
    <property type="entry name" value="PRK03348.1"/>
    <property type="match status" value="1"/>
</dbReference>
<dbReference type="PANTHER" id="PTHR11076:SF33">
    <property type="entry name" value="DNA POLYMERASE KAPPA"/>
    <property type="match status" value="1"/>
</dbReference>
<dbReference type="PANTHER" id="PTHR11076">
    <property type="entry name" value="DNA REPAIR POLYMERASE UMUC / TRANSFERASE FAMILY MEMBER"/>
    <property type="match status" value="1"/>
</dbReference>
<dbReference type="Pfam" id="PF00817">
    <property type="entry name" value="IMS"/>
    <property type="match status" value="1"/>
</dbReference>
<dbReference type="Pfam" id="PF11799">
    <property type="entry name" value="IMS_C"/>
    <property type="match status" value="1"/>
</dbReference>
<dbReference type="Pfam" id="PF21999">
    <property type="entry name" value="IMS_HHH_1"/>
    <property type="match status" value="1"/>
</dbReference>
<dbReference type="SUPFAM" id="SSF56672">
    <property type="entry name" value="DNA/RNA polymerases"/>
    <property type="match status" value="1"/>
</dbReference>
<dbReference type="SUPFAM" id="SSF100879">
    <property type="entry name" value="Lesion bypass DNA polymerase (Y-family), little finger domain"/>
    <property type="match status" value="1"/>
</dbReference>
<dbReference type="PROSITE" id="PS50173">
    <property type="entry name" value="UMUC"/>
    <property type="match status" value="1"/>
</dbReference>
<gene>
    <name evidence="1" type="primary">dinB</name>
    <name type="ordered locus">cgR_2026</name>
</gene>
<evidence type="ECO:0000255" key="1">
    <source>
        <dbReference type="HAMAP-Rule" id="MF_01113"/>
    </source>
</evidence>
<evidence type="ECO:0000256" key="2">
    <source>
        <dbReference type="SAM" id="MobiDB-lite"/>
    </source>
</evidence>
<accession>A4QFK8</accession>
<keyword id="KW-0963">Cytoplasm</keyword>
<keyword id="KW-0227">DNA damage</keyword>
<keyword id="KW-0234">DNA repair</keyword>
<keyword id="KW-0235">DNA replication</keyword>
<keyword id="KW-0238">DNA-binding</keyword>
<keyword id="KW-0239">DNA-directed DNA polymerase</keyword>
<keyword id="KW-0460">Magnesium</keyword>
<keyword id="KW-0479">Metal-binding</keyword>
<keyword id="KW-0515">Mutator protein</keyword>
<keyword id="KW-0548">Nucleotidyltransferase</keyword>
<keyword id="KW-0808">Transferase</keyword>
<sequence length="467" mass="50741">MQRWVLHIDMDAFFASCEQLTRPTLRGRPVLVGGVSGRGVVAGASYEARKFGARSAMPMHQAKARVGFGAVVVTPRHIVYSAASRRVFQIVEKRAGIVERLSIDEGFMEPEALVGATPEEVKQWAEELRAEIKEVTGLPSSVGAGSGKQIAKIGSGEAKPDGVFVVPVDKQHDLLDPLPVGALWGVGPVTGSKLASMGVETIGDLAALTQKEVEISLGATIGISLWNLARGIDDRPVEPRAEAKQISQEHTYEKDLLTRQQVDAAIIRSAEGAHRRLLKDGRGARTVSVKLRMADFRIESRSYTLSYATDDYATLEATAFRLARYPGEVGPIRLVGVSFSGLEESRQDILFPELDQQIIVPPAPDTDYEVGVQSSSSSESTQVEAPQDVALSMWRATQDVYHPEYGHGWVQGAGHGVVSVRFETRSTTKGRTKSFSMDDPDLTPADPLDSLDWADWFAENGETGDDE</sequence>
<comment type="function">
    <text evidence="1">Poorly processive, error-prone DNA polymerase involved in untargeted mutagenesis. Copies undamaged DNA at stalled replication forks, which arise in vivo from mismatched or misaligned primer ends. These misaligned primers can be extended by PolIV. Exhibits no 3'-5' exonuclease (proofreading) activity. May be involved in translesional synthesis, in conjunction with the beta clamp from PolIII.</text>
</comment>
<comment type="catalytic activity">
    <reaction evidence="1">
        <text>DNA(n) + a 2'-deoxyribonucleoside 5'-triphosphate = DNA(n+1) + diphosphate</text>
        <dbReference type="Rhea" id="RHEA:22508"/>
        <dbReference type="Rhea" id="RHEA-COMP:17339"/>
        <dbReference type="Rhea" id="RHEA-COMP:17340"/>
        <dbReference type="ChEBI" id="CHEBI:33019"/>
        <dbReference type="ChEBI" id="CHEBI:61560"/>
        <dbReference type="ChEBI" id="CHEBI:173112"/>
        <dbReference type="EC" id="2.7.7.7"/>
    </reaction>
</comment>
<comment type="cofactor">
    <cofactor evidence="1">
        <name>Mg(2+)</name>
        <dbReference type="ChEBI" id="CHEBI:18420"/>
    </cofactor>
    <text evidence="1">Binds 2 magnesium ions per subunit.</text>
</comment>
<comment type="subunit">
    <text evidence="1">Monomer.</text>
</comment>
<comment type="subcellular location">
    <subcellularLocation>
        <location evidence="1">Cytoplasm</location>
    </subcellularLocation>
</comment>
<comment type="similarity">
    <text evidence="1">Belongs to the DNA polymerase type-Y family.</text>
</comment>
<protein>
    <recommendedName>
        <fullName evidence="1">DNA polymerase IV</fullName>
        <shortName evidence="1">Pol IV</shortName>
        <ecNumber evidence="1">2.7.7.7</ecNumber>
    </recommendedName>
</protein>
<feature type="chain" id="PRO_1000084887" description="DNA polymerase IV">
    <location>
        <begin position="1"/>
        <end position="467"/>
    </location>
</feature>
<feature type="domain" description="UmuC" evidence="1">
    <location>
        <begin position="5"/>
        <end position="187"/>
    </location>
</feature>
<feature type="region of interest" description="Disordered" evidence="2">
    <location>
        <begin position="364"/>
        <end position="386"/>
    </location>
</feature>
<feature type="region of interest" description="Disordered" evidence="2">
    <location>
        <begin position="428"/>
        <end position="449"/>
    </location>
</feature>
<feature type="active site" evidence="1">
    <location>
        <position position="105"/>
    </location>
</feature>
<feature type="binding site" evidence="1">
    <location>
        <position position="9"/>
    </location>
    <ligand>
        <name>Mg(2+)</name>
        <dbReference type="ChEBI" id="CHEBI:18420"/>
    </ligand>
</feature>
<feature type="binding site" evidence="1">
    <location>
        <position position="104"/>
    </location>
    <ligand>
        <name>Mg(2+)</name>
        <dbReference type="ChEBI" id="CHEBI:18420"/>
    </ligand>
</feature>
<feature type="site" description="Substrate discrimination" evidence="1">
    <location>
        <position position="14"/>
    </location>
</feature>
<reference key="1">
    <citation type="journal article" date="2007" name="Microbiology">
        <title>Comparative analysis of the Corynebacterium glutamicum group and complete genome sequence of strain R.</title>
        <authorList>
            <person name="Yukawa H."/>
            <person name="Omumasaba C.A."/>
            <person name="Nonaka H."/>
            <person name="Kos P."/>
            <person name="Okai N."/>
            <person name="Suzuki N."/>
            <person name="Suda M."/>
            <person name="Tsuge Y."/>
            <person name="Watanabe J."/>
            <person name="Ikeda Y."/>
            <person name="Vertes A.A."/>
            <person name="Inui M."/>
        </authorList>
    </citation>
    <scope>NUCLEOTIDE SEQUENCE [LARGE SCALE GENOMIC DNA]</scope>
    <source>
        <strain>R</strain>
    </source>
</reference>
<proteinExistence type="inferred from homology"/>
<name>DPO4_CORGB</name>